<reference key="1">
    <citation type="journal article" date="2009" name="PLoS Genet.">
        <title>Organised genome dynamics in the Escherichia coli species results in highly diverse adaptive paths.</title>
        <authorList>
            <person name="Touchon M."/>
            <person name="Hoede C."/>
            <person name="Tenaillon O."/>
            <person name="Barbe V."/>
            <person name="Baeriswyl S."/>
            <person name="Bidet P."/>
            <person name="Bingen E."/>
            <person name="Bonacorsi S."/>
            <person name="Bouchier C."/>
            <person name="Bouvet O."/>
            <person name="Calteau A."/>
            <person name="Chiapello H."/>
            <person name="Clermont O."/>
            <person name="Cruveiller S."/>
            <person name="Danchin A."/>
            <person name="Diard M."/>
            <person name="Dossat C."/>
            <person name="Karoui M.E."/>
            <person name="Frapy E."/>
            <person name="Garry L."/>
            <person name="Ghigo J.M."/>
            <person name="Gilles A.M."/>
            <person name="Johnson J."/>
            <person name="Le Bouguenec C."/>
            <person name="Lescat M."/>
            <person name="Mangenot S."/>
            <person name="Martinez-Jehanne V."/>
            <person name="Matic I."/>
            <person name="Nassif X."/>
            <person name="Oztas S."/>
            <person name="Petit M.A."/>
            <person name="Pichon C."/>
            <person name="Rouy Z."/>
            <person name="Ruf C.S."/>
            <person name="Schneider D."/>
            <person name="Tourret J."/>
            <person name="Vacherie B."/>
            <person name="Vallenet D."/>
            <person name="Medigue C."/>
            <person name="Rocha E.P.C."/>
            <person name="Denamur E."/>
        </authorList>
    </citation>
    <scope>NUCLEOTIDE SEQUENCE [LARGE SCALE GENOMIC DNA]</scope>
    <source>
        <strain>ATCC 35469 / DSM 13698 / BCRC 15582 / CCUG 18766 / IAM 14443 / JCM 21226 / LMG 7866 / NBRC 102419 / NCTC 12128 / CDC 0568-73</strain>
    </source>
</reference>
<evidence type="ECO:0000255" key="1">
    <source>
        <dbReference type="HAMAP-Rule" id="MF_01063"/>
    </source>
</evidence>
<proteinExistence type="inferred from homology"/>
<organism>
    <name type="scientific">Escherichia fergusonii (strain ATCC 35469 / DSM 13698 / CCUG 18766 / IAM 14443 / JCM 21226 / LMG 7866 / NBRC 102419 / NCTC 12128 / CDC 0568-73)</name>
    <dbReference type="NCBI Taxonomy" id="585054"/>
    <lineage>
        <taxon>Bacteria</taxon>
        <taxon>Pseudomonadati</taxon>
        <taxon>Pseudomonadota</taxon>
        <taxon>Gammaproteobacteria</taxon>
        <taxon>Enterobacterales</taxon>
        <taxon>Enterobacteriaceae</taxon>
        <taxon>Escherichia</taxon>
    </lineage>
</organism>
<gene>
    <name evidence="1" type="primary">frsA</name>
    <name type="ordered locus">EFER_2739</name>
</gene>
<name>FRSA_ESCF3</name>
<dbReference type="EC" id="3.1.1.1" evidence="1"/>
<dbReference type="EMBL" id="CU928158">
    <property type="protein sequence ID" value="CAQ90234.1"/>
    <property type="molecule type" value="Genomic_DNA"/>
</dbReference>
<dbReference type="RefSeq" id="WP_000189564.1">
    <property type="nucleotide sequence ID" value="NC_011740.1"/>
</dbReference>
<dbReference type="SMR" id="B7LNG1"/>
<dbReference type="ESTHER" id="ecoli-yafa">
    <property type="family name" value="Duf_1100-R"/>
</dbReference>
<dbReference type="GeneID" id="75056224"/>
<dbReference type="KEGG" id="efe:EFER_2739"/>
<dbReference type="HOGENOM" id="CLU_036819_0_0_6"/>
<dbReference type="OrthoDB" id="5590073at2"/>
<dbReference type="Proteomes" id="UP000000745">
    <property type="component" value="Chromosome"/>
</dbReference>
<dbReference type="GO" id="GO:0106435">
    <property type="term" value="F:carboxylesterase activity"/>
    <property type="evidence" value="ECO:0007669"/>
    <property type="project" value="UniProtKB-EC"/>
</dbReference>
<dbReference type="FunFam" id="3.40.50.1820:FF:000022">
    <property type="entry name" value="Esterase FrsA"/>
    <property type="match status" value="1"/>
</dbReference>
<dbReference type="Gene3D" id="3.40.50.1820">
    <property type="entry name" value="alpha/beta hydrolase"/>
    <property type="match status" value="1"/>
</dbReference>
<dbReference type="HAMAP" id="MF_01063">
    <property type="entry name" value="FrsA"/>
    <property type="match status" value="1"/>
</dbReference>
<dbReference type="InterPro" id="IPR029058">
    <property type="entry name" value="AB_hydrolase_fold"/>
</dbReference>
<dbReference type="InterPro" id="IPR043423">
    <property type="entry name" value="FrsA"/>
</dbReference>
<dbReference type="InterPro" id="IPR010520">
    <property type="entry name" value="FrsA-like"/>
</dbReference>
<dbReference type="InterPro" id="IPR050261">
    <property type="entry name" value="FrsA_esterase"/>
</dbReference>
<dbReference type="NCBIfam" id="NF003460">
    <property type="entry name" value="PRK05077.1"/>
    <property type="match status" value="1"/>
</dbReference>
<dbReference type="PANTHER" id="PTHR22946">
    <property type="entry name" value="DIENELACTONE HYDROLASE DOMAIN-CONTAINING PROTEIN-RELATED"/>
    <property type="match status" value="1"/>
</dbReference>
<dbReference type="PANTHER" id="PTHR22946:SF4">
    <property type="entry name" value="ESTERASE FRSA"/>
    <property type="match status" value="1"/>
</dbReference>
<dbReference type="Pfam" id="PF06500">
    <property type="entry name" value="FrsA-like"/>
    <property type="match status" value="1"/>
</dbReference>
<dbReference type="SUPFAM" id="SSF53474">
    <property type="entry name" value="alpha/beta-Hydrolases"/>
    <property type="match status" value="1"/>
</dbReference>
<sequence length="414" mass="46936">MTQANLSETLFKPRFKHPETSTLVRRFNHGAQPPVQSALDGKTIPHWYRMINRLMWIWRGVDPREILEVQSRIVMSAAERTDNDLYDTVIGYRGGNWIYEWATQAMVWQQKACAEEDPQLSGRHWLHAATLYNIAAYPHLKGDDLAEQAQALSNRAYEEAAQRLPGTMRQMEFTVPGGAPITGFLHMPKGDGPFPTVLMCGGLDAMQTDYYSLYERYFAPRGIAMLTIDMPSVGFSSKRKLTQDSSLLHQHVLKALPNVPWVDHTRVAAFGFRFGANVAVRLAYLESPRLKAVACLGPVVHTLLSDFKCQQQVPEMYLDVLASRLGMHDASDEALRVELNRYSLKVQGLLGRRCPTPMLSGYWKNDPFSPEEDSRLITSSSADGKLLEIPFNPVYRNFDKGLQEITSWIEKRLC</sequence>
<protein>
    <recommendedName>
        <fullName evidence="1">Esterase FrsA</fullName>
        <ecNumber evidence="1">3.1.1.1</ecNumber>
    </recommendedName>
</protein>
<feature type="chain" id="PRO_1000136518" description="Esterase FrsA">
    <location>
        <begin position="1"/>
        <end position="414"/>
    </location>
</feature>
<accession>B7LNG1</accession>
<comment type="function">
    <text evidence="1">Catalyzes the hydrolysis of esters.</text>
</comment>
<comment type="catalytic activity">
    <reaction evidence="1">
        <text>a carboxylic ester + H2O = an alcohol + a carboxylate + H(+)</text>
        <dbReference type="Rhea" id="RHEA:21164"/>
        <dbReference type="ChEBI" id="CHEBI:15377"/>
        <dbReference type="ChEBI" id="CHEBI:15378"/>
        <dbReference type="ChEBI" id="CHEBI:29067"/>
        <dbReference type="ChEBI" id="CHEBI:30879"/>
        <dbReference type="ChEBI" id="CHEBI:33308"/>
        <dbReference type="EC" id="3.1.1.1"/>
    </reaction>
</comment>
<comment type="similarity">
    <text evidence="1">Belongs to the FrsA family.</text>
</comment>
<keyword id="KW-0378">Hydrolase</keyword>
<keyword id="KW-0719">Serine esterase</keyword>